<dbReference type="EMBL" id="D42079">
    <property type="protein sequence ID" value="BAA07674.1"/>
    <property type="molecule type" value="Genomic_RNA"/>
</dbReference>
<dbReference type="GO" id="GO:0044219">
    <property type="term" value="C:host cell plasmodesma"/>
    <property type="evidence" value="ECO:0007669"/>
    <property type="project" value="UniProtKB-SubCell"/>
</dbReference>
<dbReference type="GO" id="GO:0046740">
    <property type="term" value="P:transport of virus in host, cell to cell"/>
    <property type="evidence" value="ECO:0007669"/>
    <property type="project" value="UniProtKB-KW"/>
</dbReference>
<dbReference type="InterPro" id="IPR000603">
    <property type="entry name" value="MPV"/>
</dbReference>
<dbReference type="Pfam" id="PF00803">
    <property type="entry name" value="3A"/>
    <property type="match status" value="1"/>
</dbReference>
<evidence type="ECO:0000250" key="1"/>
<evidence type="ECO:0000305" key="2"/>
<keyword id="KW-1031">Host cell junction</keyword>
<keyword id="KW-0813">Transport</keyword>
<keyword id="KW-0916">Viral movement protein</keyword>
<gene>
    <name type="ORF">ORF3a</name>
</gene>
<sequence length="279" mass="30497">MAFQGTSRTLTQQSSAATSDELQKILFSPDAIKKMATECDLGRHHWMRADNAISVRPLVPEVTHGSIASFFKSGYDAGELRSKGYMSVPQVLCAVTRTVSTDAEGSLRIYLADLGDKELSPIDGQCVSLHNHDLPALVSFQPTYDCPMETIGNRKRCFAVVIERHGYIGYTGTTASVCSNWQARFSSKNNNYTHIAAGKTLVLPFNRLAEQTKPSAVARLLKSQLNNIESSQYVLSKAKINQNARSESEELNVESPSFAIGSSSASRSEAFRPQVVNGL</sequence>
<protein>
    <recommendedName>
        <fullName>Movement protein</fullName>
        <shortName>MP</shortName>
    </recommendedName>
    <alternativeName>
        <fullName>Protein 3A</fullName>
    </alternativeName>
</protein>
<feature type="chain" id="PRO_0000083234" description="Movement protein">
    <location>
        <begin position="1"/>
        <end position="279"/>
    </location>
</feature>
<accession>O40982</accession>
<organism>
    <name type="scientific">Cucumber mosaic virus (strain C7-2)</name>
    <name type="common">CMV</name>
    <dbReference type="NCBI Taxonomy" id="117117"/>
    <lineage>
        <taxon>Viruses</taxon>
        <taxon>Riboviria</taxon>
        <taxon>Orthornavirae</taxon>
        <taxon>Kitrinoviricota</taxon>
        <taxon>Alsuviricetes</taxon>
        <taxon>Martellivirales</taxon>
        <taxon>Bromoviridae</taxon>
        <taxon>Cucumovirus</taxon>
        <taxon>Cucumber mosaic virus</taxon>
    </lineage>
</organism>
<comment type="function">
    <text evidence="1">Transports viral genome to neighboring plant cells directly through plasmosdesmata, without any budding. The movement protein allows efficient cell to cell propagation, by bypassing the host cell wall barrier. Acts by forming a tubular structure at the host plasmodesmata, enlarging it enough to allow free passage of virion capsids (By similarity).</text>
</comment>
<comment type="subcellular location">
    <subcellularLocation>
        <location evidence="1">Host cell junction</location>
        <location evidence="1">Host plasmodesma</location>
    </subcellularLocation>
    <text evidence="1">Assembles into long tubular structures at the surface of the infected protoplast.</text>
</comment>
<comment type="similarity">
    <text evidence="2">Belongs to the cucumovirus movement protein family.</text>
</comment>
<name>MVP_CMVC7</name>
<proteinExistence type="inferred from homology"/>
<organismHost>
    <name type="scientific">Cucumis sativus</name>
    <name type="common">Cucumber</name>
    <dbReference type="NCBI Taxonomy" id="3659"/>
</organismHost>
<organismHost>
    <name type="scientific">Solanum lycopersicum</name>
    <name type="common">Tomato</name>
    <name type="synonym">Lycopersicon esculentum</name>
    <dbReference type="NCBI Taxonomy" id="4081"/>
</organismHost>
<organismHost>
    <name type="scientific">Spinacia oleracea</name>
    <name type="common">Spinach</name>
    <dbReference type="NCBI Taxonomy" id="3562"/>
</organismHost>
<reference key="1">
    <citation type="journal article" date="1996" name="Nihon Shokubutsu Byori Gakkaiho">
        <title>Six new subgroup I members of Japanese cucumber mosaic virus as determined by nucleotide sequence analysis on RNA3's cDNAs.</title>
        <authorList>
            <person name="Chaumpluk P."/>
            <person name="Sasaki Y."/>
            <person name="Nakajima N."/>
            <person name="Nagano H."/>
            <person name="Nakamura I."/>
            <person name="Suzuki K."/>
            <person name="Mise K."/>
            <person name="Inouye N."/>
            <person name="Okuno T."/>
            <person name="Furusawa I."/>
        </authorList>
    </citation>
    <scope>NUCLEOTIDE SEQUENCE [GENOMIC RNA]</scope>
</reference>